<reference key="1">
    <citation type="submission" date="2006-08" db="EMBL/GenBank/DDBJ databases">
        <title>Complete sequence of chromosome 1 of Burkholderia cenocepacia HI2424.</title>
        <authorList>
            <person name="Copeland A."/>
            <person name="Lucas S."/>
            <person name="Lapidus A."/>
            <person name="Barry K."/>
            <person name="Detter J.C."/>
            <person name="Glavina del Rio T."/>
            <person name="Hammon N."/>
            <person name="Israni S."/>
            <person name="Pitluck S."/>
            <person name="Chain P."/>
            <person name="Malfatti S."/>
            <person name="Shin M."/>
            <person name="Vergez L."/>
            <person name="Schmutz J."/>
            <person name="Larimer F."/>
            <person name="Land M."/>
            <person name="Hauser L."/>
            <person name="Kyrpides N."/>
            <person name="Kim E."/>
            <person name="LiPuma J.J."/>
            <person name="Gonzalez C.F."/>
            <person name="Konstantinidis K."/>
            <person name="Tiedje J.M."/>
            <person name="Richardson P."/>
        </authorList>
    </citation>
    <scope>NUCLEOTIDE SEQUENCE [LARGE SCALE GENOMIC DNA]</scope>
    <source>
        <strain>HI2424</strain>
    </source>
</reference>
<dbReference type="EC" id="2.7.1.30" evidence="1"/>
<dbReference type="EMBL" id="CP000458">
    <property type="protein sequence ID" value="ABK09428.1"/>
    <property type="molecule type" value="Genomic_DNA"/>
</dbReference>
<dbReference type="RefSeq" id="WP_011546147.1">
    <property type="nucleotide sequence ID" value="NC_008542.1"/>
</dbReference>
<dbReference type="SMR" id="A0KAA1"/>
<dbReference type="GeneID" id="83049492"/>
<dbReference type="KEGG" id="bch:Bcen2424_2678"/>
<dbReference type="HOGENOM" id="CLU_009281_2_3_4"/>
<dbReference type="UniPathway" id="UPA00618">
    <property type="reaction ID" value="UER00672"/>
</dbReference>
<dbReference type="GO" id="GO:0005829">
    <property type="term" value="C:cytosol"/>
    <property type="evidence" value="ECO:0007669"/>
    <property type="project" value="TreeGrafter"/>
</dbReference>
<dbReference type="GO" id="GO:0005524">
    <property type="term" value="F:ATP binding"/>
    <property type="evidence" value="ECO:0007669"/>
    <property type="project" value="UniProtKB-UniRule"/>
</dbReference>
<dbReference type="GO" id="GO:0004370">
    <property type="term" value="F:glycerol kinase activity"/>
    <property type="evidence" value="ECO:0000250"/>
    <property type="project" value="UniProtKB"/>
</dbReference>
<dbReference type="GO" id="GO:0019563">
    <property type="term" value="P:glycerol catabolic process"/>
    <property type="evidence" value="ECO:0007669"/>
    <property type="project" value="UniProtKB-UniRule"/>
</dbReference>
<dbReference type="GO" id="GO:0006071">
    <property type="term" value="P:glycerol metabolic process"/>
    <property type="evidence" value="ECO:0000250"/>
    <property type="project" value="UniProtKB"/>
</dbReference>
<dbReference type="GO" id="GO:0006072">
    <property type="term" value="P:glycerol-3-phosphate metabolic process"/>
    <property type="evidence" value="ECO:0007669"/>
    <property type="project" value="InterPro"/>
</dbReference>
<dbReference type="CDD" id="cd07786">
    <property type="entry name" value="FGGY_EcGK_like"/>
    <property type="match status" value="1"/>
</dbReference>
<dbReference type="FunFam" id="3.30.420.40:FF:000007">
    <property type="entry name" value="Glycerol kinase"/>
    <property type="match status" value="1"/>
</dbReference>
<dbReference type="FunFam" id="3.30.420.40:FF:000008">
    <property type="entry name" value="Glycerol kinase"/>
    <property type="match status" value="1"/>
</dbReference>
<dbReference type="Gene3D" id="3.30.420.40">
    <property type="match status" value="2"/>
</dbReference>
<dbReference type="HAMAP" id="MF_00186">
    <property type="entry name" value="Glycerol_kin"/>
    <property type="match status" value="1"/>
</dbReference>
<dbReference type="InterPro" id="IPR043129">
    <property type="entry name" value="ATPase_NBD"/>
</dbReference>
<dbReference type="InterPro" id="IPR000577">
    <property type="entry name" value="Carb_kinase_FGGY"/>
</dbReference>
<dbReference type="InterPro" id="IPR018483">
    <property type="entry name" value="Carb_kinase_FGGY_CS"/>
</dbReference>
<dbReference type="InterPro" id="IPR018485">
    <property type="entry name" value="FGGY_C"/>
</dbReference>
<dbReference type="InterPro" id="IPR018484">
    <property type="entry name" value="FGGY_N"/>
</dbReference>
<dbReference type="InterPro" id="IPR005999">
    <property type="entry name" value="Glycerol_kin"/>
</dbReference>
<dbReference type="NCBIfam" id="TIGR01311">
    <property type="entry name" value="glycerol_kin"/>
    <property type="match status" value="1"/>
</dbReference>
<dbReference type="NCBIfam" id="NF000756">
    <property type="entry name" value="PRK00047.1"/>
    <property type="match status" value="1"/>
</dbReference>
<dbReference type="PANTHER" id="PTHR10196:SF69">
    <property type="entry name" value="GLYCEROL KINASE"/>
    <property type="match status" value="1"/>
</dbReference>
<dbReference type="PANTHER" id="PTHR10196">
    <property type="entry name" value="SUGAR KINASE"/>
    <property type="match status" value="1"/>
</dbReference>
<dbReference type="Pfam" id="PF02782">
    <property type="entry name" value="FGGY_C"/>
    <property type="match status" value="1"/>
</dbReference>
<dbReference type="Pfam" id="PF00370">
    <property type="entry name" value="FGGY_N"/>
    <property type="match status" value="1"/>
</dbReference>
<dbReference type="PIRSF" id="PIRSF000538">
    <property type="entry name" value="GlpK"/>
    <property type="match status" value="1"/>
</dbReference>
<dbReference type="SUPFAM" id="SSF53067">
    <property type="entry name" value="Actin-like ATPase domain"/>
    <property type="match status" value="2"/>
</dbReference>
<dbReference type="PROSITE" id="PS00933">
    <property type="entry name" value="FGGY_KINASES_1"/>
    <property type="match status" value="1"/>
</dbReference>
<dbReference type="PROSITE" id="PS00445">
    <property type="entry name" value="FGGY_KINASES_2"/>
    <property type="match status" value="1"/>
</dbReference>
<sequence>MQDQYILALDQGTTSSRAMLFDRQGNIVSIAQKEFEQIYPQPGWVEHDPQEIWSTQAGVAAEAVTRTGLNGTSIAAIGITNQRETTIVWDRETGQPVYNAIVWQDRRTADFCDSLKKQGLEAKVRAKTGLPIDSYFSATKIRWILDNVPGARDKARQGKLAFGTVDSWLVWNFTKHELHVTDVTNASRTMLFNIHTREWDSELLELLDIPRSMLPEVKASSEIYGHTKTTVFASKIPLAGIAGDQHAALFGQMCTTSGMVKNTYGTGCFLMMNTGDKPIESKNNLVTTIAWQIGDDVQYALEGSIFIAGAVVQWLRDGVGLIKTAAEIEALAASVPHTDGVYLVPAFAGLGAPHWNARARGSVFGVTRGTSAAHLARAALDAIAYQSLDVLAAMEADSGISIGELRVDGGASANDLLMQFQADLLGVDAVRPQITETTALGAAYLAGLAIGYWKNLDEVRDQWQLDRRFAPSMPKEQVEQRMAGWQRAVRAAKAWADDTQ</sequence>
<name>GLPK_BURCH</name>
<keyword id="KW-0067">ATP-binding</keyword>
<keyword id="KW-0319">Glycerol metabolism</keyword>
<keyword id="KW-0418">Kinase</keyword>
<keyword id="KW-0547">Nucleotide-binding</keyword>
<keyword id="KW-0808">Transferase</keyword>
<gene>
    <name evidence="1" type="primary">glpK</name>
    <name type="ordered locus">Bcen2424_2678</name>
</gene>
<proteinExistence type="inferred from homology"/>
<organism>
    <name type="scientific">Burkholderia cenocepacia (strain HI2424)</name>
    <dbReference type="NCBI Taxonomy" id="331272"/>
    <lineage>
        <taxon>Bacteria</taxon>
        <taxon>Pseudomonadati</taxon>
        <taxon>Pseudomonadota</taxon>
        <taxon>Betaproteobacteria</taxon>
        <taxon>Burkholderiales</taxon>
        <taxon>Burkholderiaceae</taxon>
        <taxon>Burkholderia</taxon>
        <taxon>Burkholderia cepacia complex</taxon>
    </lineage>
</organism>
<comment type="function">
    <text evidence="1">Key enzyme in the regulation of glycerol uptake and metabolism. Catalyzes the phosphorylation of glycerol to yield sn-glycerol 3-phosphate.</text>
</comment>
<comment type="catalytic activity">
    <reaction evidence="1">
        <text>glycerol + ATP = sn-glycerol 3-phosphate + ADP + H(+)</text>
        <dbReference type="Rhea" id="RHEA:21644"/>
        <dbReference type="ChEBI" id="CHEBI:15378"/>
        <dbReference type="ChEBI" id="CHEBI:17754"/>
        <dbReference type="ChEBI" id="CHEBI:30616"/>
        <dbReference type="ChEBI" id="CHEBI:57597"/>
        <dbReference type="ChEBI" id="CHEBI:456216"/>
        <dbReference type="EC" id="2.7.1.30"/>
    </reaction>
</comment>
<comment type="activity regulation">
    <text evidence="1">Inhibited by fructose 1,6-bisphosphate (FBP).</text>
</comment>
<comment type="pathway">
    <text evidence="1">Polyol metabolism; glycerol degradation via glycerol kinase pathway; sn-glycerol 3-phosphate from glycerol: step 1/1.</text>
</comment>
<comment type="similarity">
    <text evidence="1">Belongs to the FGGY kinase family.</text>
</comment>
<protein>
    <recommendedName>
        <fullName evidence="1">Glycerol kinase</fullName>
        <ecNumber evidence="1">2.7.1.30</ecNumber>
    </recommendedName>
    <alternativeName>
        <fullName evidence="1">ATP:glycerol 3-phosphotransferase</fullName>
    </alternativeName>
    <alternativeName>
        <fullName evidence="1">Glycerokinase</fullName>
        <shortName evidence="1">GK</shortName>
    </alternativeName>
</protein>
<feature type="chain" id="PRO_1000020710" description="Glycerol kinase">
    <location>
        <begin position="1"/>
        <end position="500"/>
    </location>
</feature>
<feature type="binding site" evidence="1">
    <location>
        <position position="13"/>
    </location>
    <ligand>
        <name>ADP</name>
        <dbReference type="ChEBI" id="CHEBI:456216"/>
    </ligand>
</feature>
<feature type="binding site" evidence="1">
    <location>
        <position position="13"/>
    </location>
    <ligand>
        <name>ATP</name>
        <dbReference type="ChEBI" id="CHEBI:30616"/>
    </ligand>
</feature>
<feature type="binding site" evidence="1">
    <location>
        <position position="13"/>
    </location>
    <ligand>
        <name>sn-glycerol 3-phosphate</name>
        <dbReference type="ChEBI" id="CHEBI:57597"/>
    </ligand>
</feature>
<feature type="binding site" evidence="1">
    <location>
        <position position="14"/>
    </location>
    <ligand>
        <name>ATP</name>
        <dbReference type="ChEBI" id="CHEBI:30616"/>
    </ligand>
</feature>
<feature type="binding site" evidence="1">
    <location>
        <position position="15"/>
    </location>
    <ligand>
        <name>ATP</name>
        <dbReference type="ChEBI" id="CHEBI:30616"/>
    </ligand>
</feature>
<feature type="binding site" evidence="1">
    <location>
        <position position="17"/>
    </location>
    <ligand>
        <name>ADP</name>
        <dbReference type="ChEBI" id="CHEBI:456216"/>
    </ligand>
</feature>
<feature type="binding site" evidence="1">
    <location>
        <position position="83"/>
    </location>
    <ligand>
        <name>glycerol</name>
        <dbReference type="ChEBI" id="CHEBI:17754"/>
    </ligand>
</feature>
<feature type="binding site" evidence="1">
    <location>
        <position position="83"/>
    </location>
    <ligand>
        <name>sn-glycerol 3-phosphate</name>
        <dbReference type="ChEBI" id="CHEBI:57597"/>
    </ligand>
</feature>
<feature type="binding site" evidence="1">
    <location>
        <position position="84"/>
    </location>
    <ligand>
        <name>glycerol</name>
        <dbReference type="ChEBI" id="CHEBI:17754"/>
    </ligand>
</feature>
<feature type="binding site" evidence="1">
    <location>
        <position position="84"/>
    </location>
    <ligand>
        <name>sn-glycerol 3-phosphate</name>
        <dbReference type="ChEBI" id="CHEBI:57597"/>
    </ligand>
</feature>
<feature type="binding site" evidence="1">
    <location>
        <position position="135"/>
    </location>
    <ligand>
        <name>glycerol</name>
        <dbReference type="ChEBI" id="CHEBI:17754"/>
    </ligand>
</feature>
<feature type="binding site" evidence="1">
    <location>
        <position position="135"/>
    </location>
    <ligand>
        <name>sn-glycerol 3-phosphate</name>
        <dbReference type="ChEBI" id="CHEBI:57597"/>
    </ligand>
</feature>
<feature type="binding site" evidence="1">
    <location>
        <position position="244"/>
    </location>
    <ligand>
        <name>glycerol</name>
        <dbReference type="ChEBI" id="CHEBI:17754"/>
    </ligand>
</feature>
<feature type="binding site" evidence="1">
    <location>
        <position position="244"/>
    </location>
    <ligand>
        <name>sn-glycerol 3-phosphate</name>
        <dbReference type="ChEBI" id="CHEBI:57597"/>
    </ligand>
</feature>
<feature type="binding site" evidence="1">
    <location>
        <position position="245"/>
    </location>
    <ligand>
        <name>glycerol</name>
        <dbReference type="ChEBI" id="CHEBI:17754"/>
    </ligand>
</feature>
<feature type="binding site" evidence="1">
    <location>
        <position position="266"/>
    </location>
    <ligand>
        <name>ADP</name>
        <dbReference type="ChEBI" id="CHEBI:456216"/>
    </ligand>
</feature>
<feature type="binding site" evidence="1">
    <location>
        <position position="266"/>
    </location>
    <ligand>
        <name>ATP</name>
        <dbReference type="ChEBI" id="CHEBI:30616"/>
    </ligand>
</feature>
<feature type="binding site" evidence="1">
    <location>
        <position position="309"/>
    </location>
    <ligand>
        <name>ADP</name>
        <dbReference type="ChEBI" id="CHEBI:456216"/>
    </ligand>
</feature>
<feature type="binding site" evidence="1">
    <location>
        <position position="309"/>
    </location>
    <ligand>
        <name>ATP</name>
        <dbReference type="ChEBI" id="CHEBI:30616"/>
    </ligand>
</feature>
<feature type="binding site" evidence="1">
    <location>
        <position position="313"/>
    </location>
    <ligand>
        <name>ATP</name>
        <dbReference type="ChEBI" id="CHEBI:30616"/>
    </ligand>
</feature>
<feature type="binding site" evidence="1">
    <location>
        <position position="410"/>
    </location>
    <ligand>
        <name>ADP</name>
        <dbReference type="ChEBI" id="CHEBI:456216"/>
    </ligand>
</feature>
<feature type="binding site" evidence="1">
    <location>
        <position position="410"/>
    </location>
    <ligand>
        <name>ATP</name>
        <dbReference type="ChEBI" id="CHEBI:30616"/>
    </ligand>
</feature>
<feature type="binding site" evidence="1">
    <location>
        <position position="414"/>
    </location>
    <ligand>
        <name>ADP</name>
        <dbReference type="ChEBI" id="CHEBI:456216"/>
    </ligand>
</feature>
<evidence type="ECO:0000255" key="1">
    <source>
        <dbReference type="HAMAP-Rule" id="MF_00186"/>
    </source>
</evidence>
<accession>A0KAA1</accession>